<dbReference type="EMBL" id="AJ720376">
    <property type="protein sequence ID" value="CAG32035.1"/>
    <property type="molecule type" value="mRNA"/>
</dbReference>
<dbReference type="RefSeq" id="NP_001006268.1">
    <property type="nucleotide sequence ID" value="NM_001006268.2"/>
</dbReference>
<dbReference type="SMR" id="Q5ZJQ8"/>
<dbReference type="FunCoup" id="Q5ZJQ8">
    <property type="interactions" value="669"/>
</dbReference>
<dbReference type="STRING" id="9031.ENSGALP00000049996"/>
<dbReference type="GlyCosmos" id="Q5ZJQ8">
    <property type="glycosylation" value="1 site, No reported glycans"/>
</dbReference>
<dbReference type="GlyGen" id="Q5ZJQ8">
    <property type="glycosylation" value="1 site"/>
</dbReference>
<dbReference type="PaxDb" id="9031-ENSGALP00000027219"/>
<dbReference type="GeneID" id="418778"/>
<dbReference type="KEGG" id="gga:418778"/>
<dbReference type="CTD" id="337867"/>
<dbReference type="VEuPathDB" id="HostDB:geneid_418778"/>
<dbReference type="eggNOG" id="KOG4463">
    <property type="taxonomic scope" value="Eukaryota"/>
</dbReference>
<dbReference type="HOGENOM" id="CLU_057710_0_0_1"/>
<dbReference type="InParanoid" id="Q5ZJQ8"/>
<dbReference type="OrthoDB" id="272778at2759"/>
<dbReference type="PhylomeDB" id="Q5ZJQ8"/>
<dbReference type="PRO" id="PR:Q5ZJQ8"/>
<dbReference type="Proteomes" id="UP000000539">
    <property type="component" value="Chromosome 1"/>
</dbReference>
<dbReference type="Bgee" id="ENSGALG00000016880">
    <property type="expression patterns" value="Expressed in kidney and 13 other cell types or tissues"/>
</dbReference>
<dbReference type="GO" id="GO:0005789">
    <property type="term" value="C:endoplasmic reticulum membrane"/>
    <property type="evidence" value="ECO:0007669"/>
    <property type="project" value="UniProtKB-SubCell"/>
</dbReference>
<dbReference type="GO" id="GO:0004252">
    <property type="term" value="F:serine-type endopeptidase activity"/>
    <property type="evidence" value="ECO:0000318"/>
    <property type="project" value="GO_Central"/>
</dbReference>
<dbReference type="GO" id="GO:0090090">
    <property type="term" value="P:negative regulation of canonical Wnt signaling pathway"/>
    <property type="evidence" value="ECO:0000250"/>
    <property type="project" value="UniProtKB"/>
</dbReference>
<dbReference type="GO" id="GO:0016055">
    <property type="term" value="P:Wnt signaling pathway"/>
    <property type="evidence" value="ECO:0007669"/>
    <property type="project" value="UniProtKB-KW"/>
</dbReference>
<dbReference type="CDD" id="cd14305">
    <property type="entry name" value="UBA_UBAC2"/>
    <property type="match status" value="1"/>
</dbReference>
<dbReference type="FunFam" id="1.10.8.10:FF:000074">
    <property type="entry name" value="Ubiquitin-associated domain-containing protein 2"/>
    <property type="match status" value="1"/>
</dbReference>
<dbReference type="Gene3D" id="1.10.8.10">
    <property type="entry name" value="DNA helicase RuvA subunit, C-terminal domain"/>
    <property type="match status" value="1"/>
</dbReference>
<dbReference type="Gene3D" id="1.20.1540.10">
    <property type="entry name" value="Rhomboid-like"/>
    <property type="match status" value="1"/>
</dbReference>
<dbReference type="InterPro" id="IPR035952">
    <property type="entry name" value="Rhomboid-like_sf"/>
</dbReference>
<dbReference type="InterPro" id="IPR015940">
    <property type="entry name" value="UBA"/>
</dbReference>
<dbReference type="InterPro" id="IPR009060">
    <property type="entry name" value="UBA-like_sf"/>
</dbReference>
<dbReference type="InterPro" id="IPR041928">
    <property type="entry name" value="UBA_UBAC2"/>
</dbReference>
<dbReference type="PANTHER" id="PTHR43066">
    <property type="entry name" value="RHOMBOID-RELATED PROTEIN"/>
    <property type="match status" value="1"/>
</dbReference>
<dbReference type="PANTHER" id="PTHR43066:SF21">
    <property type="entry name" value="UBIQUITIN-ASSOCIATED DOMAIN-CONTAINING PROTEIN 2"/>
    <property type="match status" value="1"/>
</dbReference>
<dbReference type="Pfam" id="PF00627">
    <property type="entry name" value="UBA"/>
    <property type="match status" value="1"/>
</dbReference>
<dbReference type="SMART" id="SM00165">
    <property type="entry name" value="UBA"/>
    <property type="match status" value="1"/>
</dbReference>
<dbReference type="SUPFAM" id="SSF144091">
    <property type="entry name" value="Rhomboid-like"/>
    <property type="match status" value="1"/>
</dbReference>
<dbReference type="SUPFAM" id="SSF46934">
    <property type="entry name" value="UBA-like"/>
    <property type="match status" value="1"/>
</dbReference>
<dbReference type="PROSITE" id="PS50030">
    <property type="entry name" value="UBA"/>
    <property type="match status" value="1"/>
</dbReference>
<accession>Q5ZJQ8</accession>
<keyword id="KW-0256">Endoplasmic reticulum</keyword>
<keyword id="KW-0325">Glycoprotein</keyword>
<keyword id="KW-0472">Membrane</keyword>
<keyword id="KW-1185">Reference proteome</keyword>
<keyword id="KW-0732">Signal</keyword>
<keyword id="KW-0812">Transmembrane</keyword>
<keyword id="KW-1133">Transmembrane helix</keyword>
<keyword id="KW-0879">Wnt signaling pathway</keyword>
<evidence type="ECO:0000250" key="1">
    <source>
        <dbReference type="UniProtKB" id="Q8NBM4"/>
    </source>
</evidence>
<evidence type="ECO:0000255" key="2"/>
<evidence type="ECO:0000255" key="3">
    <source>
        <dbReference type="PROSITE-ProRule" id="PRU00212"/>
    </source>
</evidence>
<evidence type="ECO:0000256" key="4">
    <source>
        <dbReference type="SAM" id="MobiDB-lite"/>
    </source>
</evidence>
<proteinExistence type="evidence at transcript level"/>
<feature type="signal peptide" evidence="2">
    <location>
        <begin position="1"/>
        <end position="34"/>
    </location>
</feature>
<feature type="chain" id="PRO_0000280757" description="Ubiquitin-associated domain-containing protein 2">
    <location>
        <begin position="35"/>
        <end position="344"/>
    </location>
</feature>
<feature type="topological domain" description="Extracellular" evidence="2">
    <location>
        <begin position="35"/>
        <end position="91"/>
    </location>
</feature>
<feature type="transmembrane region" description="Helical" evidence="2">
    <location>
        <begin position="92"/>
        <end position="111"/>
    </location>
</feature>
<feature type="topological domain" description="Cytoplasmic" evidence="2">
    <location>
        <begin position="112"/>
        <end position="123"/>
    </location>
</feature>
<feature type="transmembrane region" description="Helical" evidence="2">
    <location>
        <begin position="124"/>
        <end position="142"/>
    </location>
</feature>
<feature type="topological domain" description="Extracellular" evidence="2">
    <location>
        <begin position="143"/>
        <end position="162"/>
    </location>
</feature>
<feature type="transmembrane region" description="Helical" evidence="2">
    <location>
        <begin position="163"/>
        <end position="183"/>
    </location>
</feature>
<feature type="topological domain" description="Cytoplasmic" evidence="2">
    <location>
        <begin position="184"/>
        <end position="344"/>
    </location>
</feature>
<feature type="domain" description="UBA" evidence="3">
    <location>
        <begin position="304"/>
        <end position="344"/>
    </location>
</feature>
<feature type="region of interest" description="Disordered" evidence="4">
    <location>
        <begin position="284"/>
        <end position="307"/>
    </location>
</feature>
<feature type="compositionally biased region" description="Basic and acidic residues" evidence="4">
    <location>
        <begin position="286"/>
        <end position="296"/>
    </location>
</feature>
<feature type="glycosylation site" description="N-linked (GlcNAc...) asparagine" evidence="2">
    <location>
        <position position="160"/>
    </location>
</feature>
<name>UBAC2_CHICK</name>
<comment type="function">
    <text evidence="1">Restricts trafficking of FAF2 from the endoplasmic reticulum to lipid droplets (By similarity). May negatively regulate the canonical Wnt signaling pathway in the lymphocytes (By similarity).</text>
</comment>
<comment type="subcellular location">
    <subcellularLocation>
        <location evidence="1">Endoplasmic reticulum membrane</location>
        <topology evidence="2">Multi-pass membrane protein</topology>
    </subcellularLocation>
</comment>
<sequence>MFTSTGSNGLYKAPLSKSLLLVPSAISILLTLLFQHYQKFFAYNLQAIKEDFQIWRLVCGRVICLDLKDTFCSSLLIYNFRIFERRYGSRKFSSFLLGAWTLSALFDLLLVEAAQYVFGITINSLPSGFLGPVFALFVPFYCSIPRVQVTQVLGYFSITNKTLVYILGLQLLTSGSYIWILALSGLISGICYNSSILKVHRILCVPSWVAKIFSWTLEPIFSSAEPTNEIRVGMGATVDIQRQQRMELLDRQIMMSQVAQMRRQRQQQGGMINWNRLFPPLRHRHNENYQDHHPSDQDTPPPTEVSEEQVARLMEMGFSRGDALEALRASNNDLNVATNFLLQH</sequence>
<gene>
    <name type="primary">UBAC2</name>
    <name type="synonym">PHGDHL1</name>
    <name type="ORF">RCJMB04_16f18</name>
</gene>
<protein>
    <recommendedName>
        <fullName>Ubiquitin-associated domain-containing protein 2</fullName>
        <shortName>UBA domain-containing protein 2</shortName>
    </recommendedName>
    <alternativeName>
        <fullName>Phosphoglycerate dehydrogenase-like protein 1</fullName>
    </alternativeName>
</protein>
<organism>
    <name type="scientific">Gallus gallus</name>
    <name type="common">Chicken</name>
    <dbReference type="NCBI Taxonomy" id="9031"/>
    <lineage>
        <taxon>Eukaryota</taxon>
        <taxon>Metazoa</taxon>
        <taxon>Chordata</taxon>
        <taxon>Craniata</taxon>
        <taxon>Vertebrata</taxon>
        <taxon>Euteleostomi</taxon>
        <taxon>Archelosauria</taxon>
        <taxon>Archosauria</taxon>
        <taxon>Dinosauria</taxon>
        <taxon>Saurischia</taxon>
        <taxon>Theropoda</taxon>
        <taxon>Coelurosauria</taxon>
        <taxon>Aves</taxon>
        <taxon>Neognathae</taxon>
        <taxon>Galloanserae</taxon>
        <taxon>Galliformes</taxon>
        <taxon>Phasianidae</taxon>
        <taxon>Phasianinae</taxon>
        <taxon>Gallus</taxon>
    </lineage>
</organism>
<reference key="1">
    <citation type="journal article" date="2005" name="Genome Biol.">
        <title>Full-length cDNAs from chicken bursal lymphocytes to facilitate gene function analysis.</title>
        <authorList>
            <person name="Caldwell R.B."/>
            <person name="Kierzek A.M."/>
            <person name="Arakawa H."/>
            <person name="Bezzubov Y."/>
            <person name="Zaim J."/>
            <person name="Fiedler P."/>
            <person name="Kutter S."/>
            <person name="Blagodatski A."/>
            <person name="Kostovska D."/>
            <person name="Koter M."/>
            <person name="Plachy J."/>
            <person name="Carninci P."/>
            <person name="Hayashizaki Y."/>
            <person name="Buerstedde J.-M."/>
        </authorList>
    </citation>
    <scope>NUCLEOTIDE SEQUENCE [LARGE SCALE MRNA]</scope>
    <source>
        <strain>CB</strain>
        <tissue>Bursa of Fabricius</tissue>
    </source>
</reference>